<sequence length="362" mass="37833">MELGLSLGEAMADAGRELVLGLGMGRREEAAEAGRRDHEVRRELEFGSMSSRCGGSSPEPTVRLTLLPMVPGLGLPWPPPPPPSSESRHLEASTRGFDVNRPPSSGGGGGGGGAEEEQDDVAGAALSSSPNNSAGSFPMDDFSGHGLGGNDAAPGGGGGDRSCSRASDEDDGGSARKKLRLSKEQSAFLEESFKEHSTLNPKQKLALAKQLNLRPRQVEVWFQNRRARTKLKQTEVDCEYLKRCCETLTEENRRLQKELAELRALKTVHPFYMHLPATTLSMCPSCERVASNSAPATASSAATSSTAAPPAAPSSGGIAATSSSAAAAAAPDHRPSSFAALFSSPRGFPLSVAPQAQPPTSS</sequence>
<keyword id="KW-0238">DNA-binding</keyword>
<keyword id="KW-0371">Homeobox</keyword>
<keyword id="KW-0539">Nucleus</keyword>
<keyword id="KW-1185">Reference proteome</keyword>
<keyword id="KW-0804">Transcription</keyword>
<keyword id="KW-0805">Transcription regulation</keyword>
<accession>Q67UE2</accession>
<accession>A3BZD4</accession>
<accession>Q0J1E0</accession>
<accession>Q6Q501</accession>
<accession>Q6Q7D5</accession>
<evidence type="ECO:0000250" key="1"/>
<evidence type="ECO:0000255" key="2">
    <source>
        <dbReference type="PROSITE-ProRule" id="PRU00108"/>
    </source>
</evidence>
<evidence type="ECO:0000256" key="3">
    <source>
        <dbReference type="SAM" id="MobiDB-lite"/>
    </source>
</evidence>
<evidence type="ECO:0000269" key="4">
    <source>
    </source>
</evidence>
<evidence type="ECO:0000305" key="5"/>
<organism>
    <name type="scientific">Oryza sativa subsp. japonica</name>
    <name type="common">Rice</name>
    <dbReference type="NCBI Taxonomy" id="39947"/>
    <lineage>
        <taxon>Eukaryota</taxon>
        <taxon>Viridiplantae</taxon>
        <taxon>Streptophyta</taxon>
        <taxon>Embryophyta</taxon>
        <taxon>Tracheophyta</taxon>
        <taxon>Spermatophyta</taxon>
        <taxon>Magnoliopsida</taxon>
        <taxon>Liliopsida</taxon>
        <taxon>Poales</taxon>
        <taxon>Poaceae</taxon>
        <taxon>BOP clade</taxon>
        <taxon>Oryzoideae</taxon>
        <taxon>Oryzeae</taxon>
        <taxon>Oryzinae</taxon>
        <taxon>Oryza</taxon>
        <taxon>Oryza sativa</taxon>
    </lineage>
</organism>
<name>HOX11_ORYSJ</name>
<feature type="chain" id="PRO_0000331695" description="Homeobox-leucine zipper protein HOX11">
    <location>
        <begin position="1"/>
        <end position="362"/>
    </location>
</feature>
<feature type="DNA-binding region" description="Homeobox" evidence="2">
    <location>
        <begin position="174"/>
        <end position="233"/>
    </location>
</feature>
<feature type="region of interest" description="Disordered" evidence="3">
    <location>
        <begin position="27"/>
        <end position="179"/>
    </location>
</feature>
<feature type="region of interest" description="Leucine-zipper">
    <location>
        <begin position="232"/>
        <end position="276"/>
    </location>
</feature>
<feature type="region of interest" description="Disordered" evidence="3">
    <location>
        <begin position="301"/>
        <end position="330"/>
    </location>
</feature>
<feature type="compositionally biased region" description="Basic and acidic residues" evidence="3">
    <location>
        <begin position="27"/>
        <end position="45"/>
    </location>
</feature>
<feature type="compositionally biased region" description="Low complexity" evidence="3">
    <location>
        <begin position="64"/>
        <end position="75"/>
    </location>
</feature>
<feature type="compositionally biased region" description="Polar residues" evidence="3">
    <location>
        <begin position="126"/>
        <end position="135"/>
    </location>
</feature>
<feature type="compositionally biased region" description="Gly residues" evidence="3">
    <location>
        <begin position="145"/>
        <end position="160"/>
    </location>
</feature>
<feature type="sequence conflict" description="In Ref. 4; EAZ44923." evidence="5" ref="4">
    <original>G</original>
    <variation>C</variation>
    <location>
        <position position="109"/>
    </location>
</feature>
<protein>
    <recommendedName>
        <fullName>Homeobox-leucine zipper protein HOX11</fullName>
    </recommendedName>
    <alternativeName>
        <fullName>HD-ZIP protein HOX11</fullName>
    </alternativeName>
    <alternativeName>
        <fullName>Homeodomain transcription factor HOX11</fullName>
    </alternativeName>
    <alternativeName>
        <fullName>OsHox11</fullName>
    </alternativeName>
</protein>
<proteinExistence type="evidence at transcript level"/>
<comment type="function">
    <text evidence="1">Probable transcription factor.</text>
</comment>
<comment type="subcellular location">
    <subcellularLocation>
        <location evidence="5">Nucleus</location>
    </subcellularLocation>
</comment>
<comment type="tissue specificity">
    <text evidence="4">Expressed in stems, leaf sheaths and blades and panicles.</text>
</comment>
<comment type="similarity">
    <text evidence="5">Belongs to the HD-ZIP homeobox family. Class II subfamily.</text>
</comment>
<comment type="sequence caution" evidence="5">
    <conflict type="erroneous gene model prediction">
        <sequence resource="EMBL-CDS" id="BAF25225"/>
    </conflict>
</comment>
<gene>
    <name type="primary">HOX11</name>
    <name type="ordered locus">Os09g0447000</name>
    <name type="ordered locus">LOC_Os09g27450</name>
    <name type="ORF">OJ1596_C06.7</name>
    <name type="ORF">OsJ_028406</name>
</gene>
<reference key="1">
    <citation type="journal article" date="2005" name="Nature">
        <title>The map-based sequence of the rice genome.</title>
        <authorList>
            <consortium name="International rice genome sequencing project (IRGSP)"/>
        </authorList>
    </citation>
    <scope>NUCLEOTIDE SEQUENCE [LARGE SCALE GENOMIC DNA]</scope>
    <source>
        <strain>cv. Nipponbare</strain>
    </source>
</reference>
<reference key="2">
    <citation type="journal article" date="2008" name="Nucleic Acids Res.">
        <title>The rice annotation project database (RAP-DB): 2008 update.</title>
        <authorList>
            <consortium name="The rice annotation project (RAP)"/>
        </authorList>
    </citation>
    <scope>GENOME REANNOTATION</scope>
    <source>
        <strain>cv. Nipponbare</strain>
    </source>
</reference>
<reference key="3">
    <citation type="journal article" date="2013" name="Rice">
        <title>Improvement of the Oryza sativa Nipponbare reference genome using next generation sequence and optical map data.</title>
        <authorList>
            <person name="Kawahara Y."/>
            <person name="de la Bastide M."/>
            <person name="Hamilton J.P."/>
            <person name="Kanamori H."/>
            <person name="McCombie W.R."/>
            <person name="Ouyang S."/>
            <person name="Schwartz D.C."/>
            <person name="Tanaka T."/>
            <person name="Wu J."/>
            <person name="Zhou S."/>
            <person name="Childs K.L."/>
            <person name="Davidson R.M."/>
            <person name="Lin H."/>
            <person name="Quesada-Ocampo L."/>
            <person name="Vaillancourt B."/>
            <person name="Sakai H."/>
            <person name="Lee S.S."/>
            <person name="Kim J."/>
            <person name="Numa H."/>
            <person name="Itoh T."/>
            <person name="Buell C.R."/>
            <person name="Matsumoto T."/>
        </authorList>
    </citation>
    <scope>GENOME REANNOTATION</scope>
    <source>
        <strain>cv. Nipponbare</strain>
    </source>
</reference>
<reference key="4">
    <citation type="journal article" date="2005" name="PLoS Biol.">
        <title>The genomes of Oryza sativa: a history of duplications.</title>
        <authorList>
            <person name="Yu J."/>
            <person name="Wang J."/>
            <person name="Lin W."/>
            <person name="Li S."/>
            <person name="Li H."/>
            <person name="Zhou J."/>
            <person name="Ni P."/>
            <person name="Dong W."/>
            <person name="Hu S."/>
            <person name="Zeng C."/>
            <person name="Zhang J."/>
            <person name="Zhang Y."/>
            <person name="Li R."/>
            <person name="Xu Z."/>
            <person name="Li S."/>
            <person name="Li X."/>
            <person name="Zheng H."/>
            <person name="Cong L."/>
            <person name="Lin L."/>
            <person name="Yin J."/>
            <person name="Geng J."/>
            <person name="Li G."/>
            <person name="Shi J."/>
            <person name="Liu J."/>
            <person name="Lv H."/>
            <person name="Li J."/>
            <person name="Wang J."/>
            <person name="Deng Y."/>
            <person name="Ran L."/>
            <person name="Shi X."/>
            <person name="Wang X."/>
            <person name="Wu Q."/>
            <person name="Li C."/>
            <person name="Ren X."/>
            <person name="Wang J."/>
            <person name="Wang X."/>
            <person name="Li D."/>
            <person name="Liu D."/>
            <person name="Zhang X."/>
            <person name="Ji Z."/>
            <person name="Zhao W."/>
            <person name="Sun Y."/>
            <person name="Zhang Z."/>
            <person name="Bao J."/>
            <person name="Han Y."/>
            <person name="Dong L."/>
            <person name="Ji J."/>
            <person name="Chen P."/>
            <person name="Wu S."/>
            <person name="Liu J."/>
            <person name="Xiao Y."/>
            <person name="Bu D."/>
            <person name="Tan J."/>
            <person name="Yang L."/>
            <person name="Ye C."/>
            <person name="Zhang J."/>
            <person name="Xu J."/>
            <person name="Zhou Y."/>
            <person name="Yu Y."/>
            <person name="Zhang B."/>
            <person name="Zhuang S."/>
            <person name="Wei H."/>
            <person name="Liu B."/>
            <person name="Lei M."/>
            <person name="Yu H."/>
            <person name="Li Y."/>
            <person name="Xu H."/>
            <person name="Wei S."/>
            <person name="He X."/>
            <person name="Fang L."/>
            <person name="Zhang Z."/>
            <person name="Zhang Y."/>
            <person name="Huang X."/>
            <person name="Su Z."/>
            <person name="Tong W."/>
            <person name="Li J."/>
            <person name="Tong Z."/>
            <person name="Li S."/>
            <person name="Ye J."/>
            <person name="Wang L."/>
            <person name="Fang L."/>
            <person name="Lei T."/>
            <person name="Chen C.-S."/>
            <person name="Chen H.-C."/>
            <person name="Xu Z."/>
            <person name="Li H."/>
            <person name="Huang H."/>
            <person name="Zhang F."/>
            <person name="Xu H."/>
            <person name="Li N."/>
            <person name="Zhao C."/>
            <person name="Li S."/>
            <person name="Dong L."/>
            <person name="Huang Y."/>
            <person name="Li L."/>
            <person name="Xi Y."/>
            <person name="Qi Q."/>
            <person name="Li W."/>
            <person name="Zhang B."/>
            <person name="Hu W."/>
            <person name="Zhang Y."/>
            <person name="Tian X."/>
            <person name="Jiao Y."/>
            <person name="Liang X."/>
            <person name="Jin J."/>
            <person name="Gao L."/>
            <person name="Zheng W."/>
            <person name="Hao B."/>
            <person name="Liu S.-M."/>
            <person name="Wang W."/>
            <person name="Yuan L."/>
            <person name="Cao M."/>
            <person name="McDermott J."/>
            <person name="Samudrala R."/>
            <person name="Wang J."/>
            <person name="Wong G.K.-S."/>
            <person name="Yang H."/>
        </authorList>
    </citation>
    <scope>NUCLEOTIDE SEQUENCE [LARGE SCALE GENOMIC DNA]</scope>
    <source>
        <strain>cv. Nipponbare</strain>
    </source>
</reference>
<reference key="5">
    <citation type="journal article" date="2008" name="Plant Mol. Biol.">
        <title>A genome-wide survey of HD-Zip genes in rice and analysis of drought-responsive family members.</title>
        <authorList>
            <person name="Agalou A."/>
            <person name="Purwantomo S."/>
            <person name="Oevernaes E."/>
            <person name="Johannesson H."/>
            <person name="Zhu X."/>
            <person name="Estiati A."/>
            <person name="de Kam R.J."/>
            <person name="Engstroem P."/>
            <person name="Slamet-Loedin I.H."/>
            <person name="Zhu Z."/>
            <person name="Wang M."/>
            <person name="Xiong L."/>
            <person name="Meijer A.H."/>
            <person name="Ouwerkerk P.B.F."/>
        </authorList>
    </citation>
    <scope>NUCLEOTIDE SEQUENCE [GENOMIC DNA] OF 181-227</scope>
    <scope>NUCLEOTIDE SEQUENCE [MRNA] OF 181-270</scope>
    <scope>TISSUE SPECIFICITY</scope>
    <scope>GENE FAMILY</scope>
    <scope>NOMENCLATURE</scope>
    <source>
        <strain>cv. Nipponbare</strain>
    </source>
</reference>
<dbReference type="EMBL" id="AP005575">
    <property type="protein sequence ID" value="BAD38229.1"/>
    <property type="molecule type" value="Genomic_DNA"/>
</dbReference>
<dbReference type="EMBL" id="AP008215">
    <property type="protein sequence ID" value="BAF25225.1"/>
    <property type="status" value="ALT_SEQ"/>
    <property type="molecule type" value="Genomic_DNA"/>
</dbReference>
<dbReference type="EMBL" id="AP014965">
    <property type="status" value="NOT_ANNOTATED_CDS"/>
    <property type="molecule type" value="Genomic_DNA"/>
</dbReference>
<dbReference type="EMBL" id="CM000146">
    <property type="protein sequence ID" value="EAZ44923.1"/>
    <property type="molecule type" value="Genomic_DNA"/>
</dbReference>
<dbReference type="EMBL" id="AY554038">
    <property type="protein sequence ID" value="AAS77207.1"/>
    <property type="molecule type" value="Genomic_DNA"/>
</dbReference>
<dbReference type="EMBL" id="AY559046">
    <property type="protein sequence ID" value="AAS68138.1"/>
    <property type="molecule type" value="mRNA"/>
</dbReference>
<dbReference type="RefSeq" id="XP_015611029.1">
    <property type="nucleotide sequence ID" value="XM_015755543.1"/>
</dbReference>
<dbReference type="SMR" id="Q67UE2"/>
<dbReference type="FunCoup" id="Q67UE2">
    <property type="interactions" value="89"/>
</dbReference>
<dbReference type="STRING" id="39947.Q67UE2"/>
<dbReference type="PaxDb" id="39947-Q67UE2"/>
<dbReference type="KEGG" id="dosa:Os09g0447000"/>
<dbReference type="eggNOG" id="KOG0483">
    <property type="taxonomic scope" value="Eukaryota"/>
</dbReference>
<dbReference type="InParanoid" id="Q67UE2"/>
<dbReference type="OrthoDB" id="6159439at2759"/>
<dbReference type="Proteomes" id="UP000000763">
    <property type="component" value="Chromosome 9"/>
</dbReference>
<dbReference type="Proteomes" id="UP000007752">
    <property type="component" value="Chromosome 9"/>
</dbReference>
<dbReference type="Proteomes" id="UP000059680">
    <property type="component" value="Chromosome 9"/>
</dbReference>
<dbReference type="GO" id="GO:0005634">
    <property type="term" value="C:nucleus"/>
    <property type="evidence" value="ECO:0007669"/>
    <property type="project" value="UniProtKB-SubCell"/>
</dbReference>
<dbReference type="GO" id="GO:0000981">
    <property type="term" value="F:DNA-binding transcription factor activity, RNA polymerase II-specific"/>
    <property type="evidence" value="ECO:0007669"/>
    <property type="project" value="InterPro"/>
</dbReference>
<dbReference type="GO" id="GO:0043565">
    <property type="term" value="F:sequence-specific DNA binding"/>
    <property type="evidence" value="ECO:0007669"/>
    <property type="project" value="InterPro"/>
</dbReference>
<dbReference type="CDD" id="cd00086">
    <property type="entry name" value="homeodomain"/>
    <property type="match status" value="1"/>
</dbReference>
<dbReference type="FunFam" id="1.10.10.60:FF:000577">
    <property type="entry name" value="Homeobox-leucine zipper protein 18"/>
    <property type="match status" value="1"/>
</dbReference>
<dbReference type="Gene3D" id="1.10.10.60">
    <property type="entry name" value="Homeodomain-like"/>
    <property type="match status" value="1"/>
</dbReference>
<dbReference type="InterPro" id="IPR001356">
    <property type="entry name" value="HD"/>
</dbReference>
<dbReference type="InterPro" id="IPR050762">
    <property type="entry name" value="HD-ZIP_Homeobox_LZ_Class_II"/>
</dbReference>
<dbReference type="InterPro" id="IPR017970">
    <property type="entry name" value="Homeobox_CS"/>
</dbReference>
<dbReference type="InterPro" id="IPR009057">
    <property type="entry name" value="Homeodomain-like_sf"/>
</dbReference>
<dbReference type="InterPro" id="IPR003106">
    <property type="entry name" value="Leu_zip_homeo"/>
</dbReference>
<dbReference type="PANTHER" id="PTHR45714">
    <property type="entry name" value="HOMEOBOX-LEUCINE ZIPPER PROTEIN HAT14"/>
    <property type="match status" value="1"/>
</dbReference>
<dbReference type="PANTHER" id="PTHR45714:SF39">
    <property type="entry name" value="HOMEOBOX-LEUCINE ZIPPER PROTEIN HAT14"/>
    <property type="match status" value="1"/>
</dbReference>
<dbReference type="Pfam" id="PF02183">
    <property type="entry name" value="HALZ"/>
    <property type="match status" value="1"/>
</dbReference>
<dbReference type="Pfam" id="PF00046">
    <property type="entry name" value="Homeodomain"/>
    <property type="match status" value="1"/>
</dbReference>
<dbReference type="SMART" id="SM00340">
    <property type="entry name" value="HALZ"/>
    <property type="match status" value="1"/>
</dbReference>
<dbReference type="SMART" id="SM00389">
    <property type="entry name" value="HOX"/>
    <property type="match status" value="1"/>
</dbReference>
<dbReference type="SUPFAM" id="SSF46689">
    <property type="entry name" value="Homeodomain-like"/>
    <property type="match status" value="1"/>
</dbReference>
<dbReference type="PROSITE" id="PS00027">
    <property type="entry name" value="HOMEOBOX_1"/>
    <property type="match status" value="1"/>
</dbReference>
<dbReference type="PROSITE" id="PS50071">
    <property type="entry name" value="HOMEOBOX_2"/>
    <property type="match status" value="1"/>
</dbReference>